<protein>
    <recommendedName>
        <fullName evidence="4">Zinc finger protein neuro-d4</fullName>
    </recommendedName>
    <alternativeName>
        <fullName>BRG1-associated factor 45B</fullName>
        <shortName>BAF45B</shortName>
    </alternativeName>
    <alternativeName>
        <fullName>D4, zinc and double PHD fingers family 1</fullName>
    </alternativeName>
</protein>
<accession>Q92782</accession>
<accession>B3KSY8</accession>
<accession>Q08AJ0</accession>
<keyword id="KW-0025">Alternative splicing</keyword>
<keyword id="KW-0963">Cytoplasm</keyword>
<keyword id="KW-1017">Isopeptide bond</keyword>
<keyword id="KW-0479">Metal-binding</keyword>
<keyword id="KW-0524">Neurogenesis</keyword>
<keyword id="KW-0539">Nucleus</keyword>
<keyword id="KW-1267">Proteomics identification</keyword>
<keyword id="KW-1185">Reference proteome</keyword>
<keyword id="KW-0677">Repeat</keyword>
<keyword id="KW-0804">Transcription</keyword>
<keyword id="KW-0805">Transcription regulation</keyword>
<keyword id="KW-0832">Ubl conjugation</keyword>
<keyword id="KW-0862">Zinc</keyword>
<keyword id="KW-0863">Zinc-finger</keyword>
<dbReference type="EMBL" id="U43843">
    <property type="protein sequence ID" value="AAC50685.1"/>
    <property type="molecule type" value="mRNA"/>
</dbReference>
<dbReference type="EMBL" id="AK094632">
    <property type="protein sequence ID" value="BAG52900.1"/>
    <property type="molecule type" value="mRNA"/>
</dbReference>
<dbReference type="EMBL" id="AC011479">
    <property type="status" value="NOT_ANNOTATED_CDS"/>
    <property type="molecule type" value="Genomic_DNA"/>
</dbReference>
<dbReference type="EMBL" id="CH471126">
    <property type="protein sequence ID" value="EAW56763.1"/>
    <property type="molecule type" value="Genomic_DNA"/>
</dbReference>
<dbReference type="EMBL" id="BC125153">
    <property type="protein sequence ID" value="AAI25154.1"/>
    <property type="molecule type" value="mRNA"/>
</dbReference>
<dbReference type="CCDS" id="CCDS33008.3">
    <molecule id="Q92782-1"/>
</dbReference>
<dbReference type="CCDS" id="CCDS46064.2">
    <molecule id="Q92782-2"/>
</dbReference>
<dbReference type="CCDS" id="CCDS46065.1">
    <molecule id="Q92782-3"/>
</dbReference>
<dbReference type="RefSeq" id="NP_001128627.2">
    <molecule id="Q92782-2"/>
    <property type="nucleotide sequence ID" value="NM_001135155.3"/>
</dbReference>
<dbReference type="RefSeq" id="NP_001128628.1">
    <molecule id="Q92782-3"/>
    <property type="nucleotide sequence ID" value="NM_001135156.3"/>
</dbReference>
<dbReference type="RefSeq" id="NP_001276907.1">
    <property type="nucleotide sequence ID" value="NM_001289978.1"/>
</dbReference>
<dbReference type="RefSeq" id="NP_004638.3">
    <molecule id="Q92782-1"/>
    <property type="nucleotide sequence ID" value="NM_004647.4"/>
</dbReference>
<dbReference type="SMR" id="Q92782"/>
<dbReference type="BioGRID" id="113836">
    <property type="interactions" value="95"/>
</dbReference>
<dbReference type="ComplexPortal" id="CPX-1202">
    <property type="entry name" value="Neuron-specific SWI/SNF ATP-dependent chromatin remodeling complex, ARID1A-SMARCA2 variant"/>
</dbReference>
<dbReference type="ComplexPortal" id="CPX-1216">
    <property type="entry name" value="Neuron-specific SWI/SNF ATP-dependent chromatin remodeling complex, ARID1A-SMARCA4 variant"/>
</dbReference>
<dbReference type="ComplexPortal" id="CPX-1217">
    <property type="entry name" value="Neuron-specific SWI/SNF ATP-dependent chromatin remodeling complex, ARID1B-SMARCA2 variant"/>
</dbReference>
<dbReference type="ComplexPortal" id="CPX-1218">
    <property type="entry name" value="Neuron-specific SWI/SNF ATP-dependent chromatin remodeling complex, ARID1B-SMARCA4 variant"/>
</dbReference>
<dbReference type="FunCoup" id="Q92782">
    <property type="interactions" value="735"/>
</dbReference>
<dbReference type="IntAct" id="Q92782">
    <property type="interactions" value="105"/>
</dbReference>
<dbReference type="MINT" id="Q92782"/>
<dbReference type="STRING" id="9606.ENSP00000347716"/>
<dbReference type="GlyGen" id="Q92782">
    <property type="glycosylation" value="1 site, 1 O-linked glycan (1 site)"/>
</dbReference>
<dbReference type="iPTMnet" id="Q92782"/>
<dbReference type="PhosphoSitePlus" id="Q92782"/>
<dbReference type="SwissPalm" id="Q92782"/>
<dbReference type="BioMuta" id="DPF1"/>
<dbReference type="DMDM" id="313104100"/>
<dbReference type="jPOST" id="Q92782"/>
<dbReference type="MassIVE" id="Q92782"/>
<dbReference type="PeptideAtlas" id="Q92782"/>
<dbReference type="ProteomicsDB" id="75460">
    <molecule id="Q92782-1"/>
</dbReference>
<dbReference type="ProteomicsDB" id="75461">
    <molecule id="Q92782-2"/>
</dbReference>
<dbReference type="ProteomicsDB" id="75462">
    <molecule id="Q92782-3"/>
</dbReference>
<dbReference type="Pumba" id="Q92782"/>
<dbReference type="Antibodypedia" id="16434">
    <property type="antibodies" value="166 antibodies from 27 providers"/>
</dbReference>
<dbReference type="DNASU" id="8193"/>
<dbReference type="Ensembl" id="ENST00000355526.10">
    <molecule id="Q92782-2"/>
    <property type="protein sequence ID" value="ENSP00000347716.5"/>
    <property type="gene ID" value="ENSG00000011332.22"/>
</dbReference>
<dbReference type="Ensembl" id="ENST00000412732.5">
    <molecule id="Q92782-3"/>
    <property type="protein sequence ID" value="ENSP00000412098.1"/>
    <property type="gene ID" value="ENSG00000011332.22"/>
</dbReference>
<dbReference type="Ensembl" id="ENST00000414789.5">
    <molecule id="Q92782-3"/>
    <property type="protein sequence ID" value="ENSP00000391884.1"/>
    <property type="gene ID" value="ENSG00000011332.22"/>
</dbReference>
<dbReference type="Ensembl" id="ENST00000420980.8">
    <molecule id="Q92782-1"/>
    <property type="protein sequence ID" value="ENSP00000397354.3"/>
    <property type="gene ID" value="ENSG00000011332.22"/>
</dbReference>
<dbReference type="GeneID" id="8193"/>
<dbReference type="KEGG" id="hsa:8193"/>
<dbReference type="MANE-Select" id="ENST00000355526.10">
    <property type="protein sequence ID" value="ENSP00000347716.5"/>
    <property type="RefSeq nucleotide sequence ID" value="NM_001135155.3"/>
    <property type="RefSeq protein sequence ID" value="NP_001128627.2"/>
</dbReference>
<dbReference type="UCSC" id="uc002ohl.4">
    <molecule id="Q92782-2"/>
    <property type="organism name" value="human"/>
</dbReference>
<dbReference type="AGR" id="HGNC:20225"/>
<dbReference type="CTD" id="8193"/>
<dbReference type="DisGeNET" id="8193"/>
<dbReference type="GeneCards" id="DPF1"/>
<dbReference type="HGNC" id="HGNC:20225">
    <property type="gene designation" value="DPF1"/>
</dbReference>
<dbReference type="HPA" id="ENSG00000011332">
    <property type="expression patterns" value="Tissue enriched (brain)"/>
</dbReference>
<dbReference type="MIM" id="601670">
    <property type="type" value="gene"/>
</dbReference>
<dbReference type="neXtProt" id="NX_Q92782"/>
<dbReference type="OpenTargets" id="ENSG00000011332"/>
<dbReference type="PharmGKB" id="PA134879894"/>
<dbReference type="VEuPathDB" id="HostDB:ENSG00000011332"/>
<dbReference type="GeneTree" id="ENSGT00940000160692"/>
<dbReference type="InParanoid" id="Q92782"/>
<dbReference type="OrthoDB" id="1903104at2759"/>
<dbReference type="PAN-GO" id="Q92782">
    <property type="GO annotations" value="6 GO annotations based on evolutionary models"/>
</dbReference>
<dbReference type="PhylomeDB" id="Q92782"/>
<dbReference type="PathwayCommons" id="Q92782"/>
<dbReference type="Reactome" id="R-HSA-9824585">
    <property type="pathway name" value="Regulation of MITF-M-dependent genes involved in pigmentation"/>
</dbReference>
<dbReference type="Reactome" id="R-HSA-9845323">
    <property type="pathway name" value="Regulation of endogenous retroelements by Piwi-interacting RNAs (piRNAs)"/>
</dbReference>
<dbReference type="SignaLink" id="Q92782"/>
<dbReference type="BioGRID-ORCS" id="8193">
    <property type="hits" value="14 hits in 1162 CRISPR screens"/>
</dbReference>
<dbReference type="ChiTaRS" id="DPF1">
    <property type="organism name" value="human"/>
</dbReference>
<dbReference type="GenomeRNAi" id="8193"/>
<dbReference type="Pharos" id="Q92782">
    <property type="development level" value="Tbio"/>
</dbReference>
<dbReference type="PRO" id="PR:Q92782"/>
<dbReference type="Proteomes" id="UP000005640">
    <property type="component" value="Chromosome 19"/>
</dbReference>
<dbReference type="RNAct" id="Q92782">
    <property type="molecule type" value="protein"/>
</dbReference>
<dbReference type="Bgee" id="ENSG00000011332">
    <property type="expression patterns" value="Expressed in cortical plate and 161 other cell types or tissues"/>
</dbReference>
<dbReference type="ExpressionAtlas" id="Q92782">
    <property type="expression patterns" value="baseline and differential"/>
</dbReference>
<dbReference type="GO" id="GO:0000785">
    <property type="term" value="C:chromatin"/>
    <property type="evidence" value="ECO:0000303"/>
    <property type="project" value="ComplexPortal"/>
</dbReference>
<dbReference type="GO" id="GO:0005737">
    <property type="term" value="C:cytoplasm"/>
    <property type="evidence" value="ECO:0007669"/>
    <property type="project" value="UniProtKB-SubCell"/>
</dbReference>
<dbReference type="GO" id="GO:0071565">
    <property type="term" value="C:nBAF complex"/>
    <property type="evidence" value="ECO:0000250"/>
    <property type="project" value="UniProtKB"/>
</dbReference>
<dbReference type="GO" id="GO:0005654">
    <property type="term" value="C:nucleoplasm"/>
    <property type="evidence" value="ECO:0000304"/>
    <property type="project" value="Reactome"/>
</dbReference>
<dbReference type="GO" id="GO:1990837">
    <property type="term" value="F:sequence-specific double-stranded DNA binding"/>
    <property type="evidence" value="ECO:0000314"/>
    <property type="project" value="ARUK-UCL"/>
</dbReference>
<dbReference type="GO" id="GO:0008270">
    <property type="term" value="F:zinc ion binding"/>
    <property type="evidence" value="ECO:0007669"/>
    <property type="project" value="UniProtKB-KW"/>
</dbReference>
<dbReference type="GO" id="GO:0006915">
    <property type="term" value="P:apoptotic process"/>
    <property type="evidence" value="ECO:0000304"/>
    <property type="project" value="ProtInc"/>
</dbReference>
<dbReference type="GO" id="GO:0006338">
    <property type="term" value="P:chromatin remodeling"/>
    <property type="evidence" value="ECO:0000303"/>
    <property type="project" value="ComplexPortal"/>
</dbReference>
<dbReference type="GO" id="GO:0007399">
    <property type="term" value="P:nervous system development"/>
    <property type="evidence" value="ECO:0000250"/>
    <property type="project" value="UniProtKB"/>
</dbReference>
<dbReference type="GO" id="GO:0045597">
    <property type="term" value="P:positive regulation of cell differentiation"/>
    <property type="evidence" value="ECO:0000303"/>
    <property type="project" value="ComplexPortal"/>
</dbReference>
<dbReference type="GO" id="GO:2000781">
    <property type="term" value="P:positive regulation of double-strand break repair"/>
    <property type="evidence" value="ECO:0000303"/>
    <property type="project" value="ComplexPortal"/>
</dbReference>
<dbReference type="GO" id="GO:0070316">
    <property type="term" value="P:regulation of G0 to G1 transition"/>
    <property type="evidence" value="ECO:0000303"/>
    <property type="project" value="ComplexPortal"/>
</dbReference>
<dbReference type="GO" id="GO:2000045">
    <property type="term" value="P:regulation of G1/S transition of mitotic cell cycle"/>
    <property type="evidence" value="ECO:0000303"/>
    <property type="project" value="ComplexPortal"/>
</dbReference>
<dbReference type="GO" id="GO:0030071">
    <property type="term" value="P:regulation of mitotic metaphase/anaphase transition"/>
    <property type="evidence" value="ECO:0000303"/>
    <property type="project" value="ComplexPortal"/>
</dbReference>
<dbReference type="GO" id="GO:2000819">
    <property type="term" value="P:regulation of nucleotide-excision repair"/>
    <property type="evidence" value="ECO:0000303"/>
    <property type="project" value="ComplexPortal"/>
</dbReference>
<dbReference type="GO" id="GO:0006357">
    <property type="term" value="P:regulation of transcription by RNA polymerase II"/>
    <property type="evidence" value="ECO:0000303"/>
    <property type="project" value="ComplexPortal"/>
</dbReference>
<dbReference type="CDD" id="cd15690">
    <property type="entry name" value="PHD1_DPF1"/>
    <property type="match status" value="1"/>
</dbReference>
<dbReference type="CDD" id="cd15530">
    <property type="entry name" value="PHD2_d4"/>
    <property type="match status" value="1"/>
</dbReference>
<dbReference type="FunFam" id="3.30.160.60:FF:003699">
    <property type="entry name" value="D4, zinc and double PHD fingers family 1"/>
    <property type="match status" value="1"/>
</dbReference>
<dbReference type="FunFam" id="3.30.40.10:FF:000005">
    <property type="entry name" value="zinc finger protein isoform X1"/>
    <property type="match status" value="1"/>
</dbReference>
<dbReference type="Gene3D" id="3.30.160.60">
    <property type="entry name" value="Classic Zinc Finger"/>
    <property type="match status" value="1"/>
</dbReference>
<dbReference type="Gene3D" id="3.30.40.10">
    <property type="entry name" value="Zinc/RING finger domain, C3HC4 (zinc finger)"/>
    <property type="match status" value="1"/>
</dbReference>
<dbReference type="InterPro" id="IPR025750">
    <property type="entry name" value="DPF1-3_N"/>
</dbReference>
<dbReference type="InterPro" id="IPR036236">
    <property type="entry name" value="Znf_C2H2_sf"/>
</dbReference>
<dbReference type="InterPro" id="IPR013087">
    <property type="entry name" value="Znf_C2H2_type"/>
</dbReference>
<dbReference type="InterPro" id="IPR011011">
    <property type="entry name" value="Znf_FYVE_PHD"/>
</dbReference>
<dbReference type="InterPro" id="IPR001965">
    <property type="entry name" value="Znf_PHD"/>
</dbReference>
<dbReference type="InterPro" id="IPR019787">
    <property type="entry name" value="Znf_PHD-finger"/>
</dbReference>
<dbReference type="InterPro" id="IPR013083">
    <property type="entry name" value="Znf_RING/FYVE/PHD"/>
</dbReference>
<dbReference type="PANTHER" id="PTHR45888">
    <property type="entry name" value="HL01030P-RELATED"/>
    <property type="match status" value="1"/>
</dbReference>
<dbReference type="PANTHER" id="PTHR45888:SF14">
    <property type="entry name" value="ZINC FINGER PROTEIN NEURO-D4"/>
    <property type="match status" value="1"/>
</dbReference>
<dbReference type="Pfam" id="PF14051">
    <property type="entry name" value="DPF1-3_N"/>
    <property type="match status" value="1"/>
</dbReference>
<dbReference type="Pfam" id="PF00628">
    <property type="entry name" value="PHD"/>
    <property type="match status" value="2"/>
</dbReference>
<dbReference type="SMART" id="SM00249">
    <property type="entry name" value="PHD"/>
    <property type="match status" value="2"/>
</dbReference>
<dbReference type="SMART" id="SM00355">
    <property type="entry name" value="ZnF_C2H2"/>
    <property type="match status" value="1"/>
</dbReference>
<dbReference type="SUPFAM" id="SSF57667">
    <property type="entry name" value="beta-beta-alpha zinc fingers"/>
    <property type="match status" value="1"/>
</dbReference>
<dbReference type="SUPFAM" id="SSF57903">
    <property type="entry name" value="FYVE/PHD zinc finger"/>
    <property type="match status" value="2"/>
</dbReference>
<dbReference type="PROSITE" id="PS01359">
    <property type="entry name" value="ZF_PHD_1"/>
    <property type="match status" value="1"/>
</dbReference>
<dbReference type="PROSITE" id="PS50016">
    <property type="entry name" value="ZF_PHD_2"/>
    <property type="match status" value="2"/>
</dbReference>
<dbReference type="PROSITE" id="PS00028">
    <property type="entry name" value="ZINC_FINGER_C2H2_1"/>
    <property type="match status" value="1"/>
</dbReference>
<dbReference type="PROSITE" id="PS50157">
    <property type="entry name" value="ZINC_FINGER_C2H2_2"/>
    <property type="match status" value="1"/>
</dbReference>
<comment type="function">
    <text evidence="1">May have an important role in developing neurons by participating in regulation of cell survival, possibly as a neurospecific transcription factor. Belongs to the neuron-specific chromatin remodeling complex (nBAF complex). During neural development a switch from a stem/progenitor to a postmitotic chromatin remodeling mechanism occurs as neurons exit the cell cycle and become committed to their adult state. The transition from proliferating neural stem/progenitor cells to postmitotic neurons requires a switch in subunit composition of the npBAF and nBAF complexes. As neural progenitors exit mitosis and differentiate into neurons, npBAF complexes which contain ACTL6A/BAF53A and PHF10/BAF45A, are exchanged for homologous alternative ACTL6B/BAF53B and DPF1/BAF45B or DPF3/BAF45C subunits in neuron-specific complexes (nBAF). The npBAF complex is essential for the self-renewal/proliferative capacity of the multipotent neural stem cells. The nBAF complex along with CREST plays a role regulating the activity of genes essential for dendrite growth (By similarity).</text>
</comment>
<comment type="subunit">
    <text evidence="1">Component of neuron-specific chromatin remodeling complex (nBAF complex) composed of at least, ARID1A/BAF250A or ARID1B/BAF250B, SMARCD1/BAF60A, SMARCD3/BAF60C, SMARCA2/BRM/BAF190B, SMARCA4/BRG1/BAF190A, SMARCB1/BAF47, SMARCC1/BAF155, SMARCE1/BAF57, SMARCC2/BAF170, DPF1/BAF45B, DPF3/BAF45C, ACTL6B/BAF53B and actin.</text>
</comment>
<comment type="interaction">
    <interactant intactId="EBI-23669343">
        <id>Q92782-2</id>
    </interactant>
    <interactant intactId="EBI-21535880">
        <id>Q92870-2</id>
        <label>APBB2</label>
    </interactant>
    <organismsDiffer>false</organismsDiffer>
    <experiments>3</experiments>
</comment>
<comment type="interaction">
    <interactant intactId="EBI-23669343">
        <id>Q92782-2</id>
    </interactant>
    <interactant intactId="EBI-718729">
        <id>P55212</id>
        <label>CASP6</label>
    </interactant>
    <organismsDiffer>false</organismsDiffer>
    <experiments>3</experiments>
</comment>
<comment type="interaction">
    <interactant intactId="EBI-23669343">
        <id>Q92782-2</id>
    </interactant>
    <interactant intactId="EBI-25837549">
        <id>P28329-3</id>
        <label>CHAT</label>
    </interactant>
    <organismsDiffer>false</organismsDiffer>
    <experiments>3</experiments>
</comment>
<comment type="interaction">
    <interactant intactId="EBI-23669343">
        <id>Q92782-2</id>
    </interactant>
    <interactant intactId="EBI-10976677">
        <id>G5E9A7</id>
        <label>DMWD</label>
    </interactant>
    <organismsDiffer>false</organismsDiffer>
    <experiments>3</experiments>
</comment>
<comment type="interaction">
    <interactant intactId="EBI-23669343">
        <id>Q92782-2</id>
    </interactant>
    <interactant intactId="EBI-750300">
        <id>Q01658</id>
        <label>DR1</label>
    </interactant>
    <organismsDiffer>false</organismsDiffer>
    <experiments>3</experiments>
</comment>
<comment type="interaction">
    <interactant intactId="EBI-23669343">
        <id>Q92782-2</id>
    </interactant>
    <interactant intactId="EBI-1054228">
        <id>P41091</id>
        <label>EIF2S3</label>
    </interactant>
    <organismsDiffer>false</organismsDiffer>
    <experiments>3</experiments>
</comment>
<comment type="interaction">
    <interactant intactId="EBI-23669343">
        <id>Q92782-2</id>
    </interactant>
    <interactant intactId="EBI-25852368">
        <id>O75460-2</id>
        <label>ERN1</label>
    </interactant>
    <organismsDiffer>false</organismsDiffer>
    <experiments>3</experiments>
</comment>
<comment type="interaction">
    <interactant intactId="EBI-23669343">
        <id>Q92782-2</id>
    </interactant>
    <interactant intactId="EBI-348399">
        <id>P22607</id>
        <label>FGFR3</label>
    </interactant>
    <organismsDiffer>false</organismsDiffer>
    <experiments>3</experiments>
</comment>
<comment type="interaction">
    <interactant intactId="EBI-23669343">
        <id>Q92782-2</id>
    </interactant>
    <interactant intactId="EBI-10226858">
        <id>Q0VDC6</id>
        <label>FKBP1A</label>
    </interactant>
    <organismsDiffer>false</organismsDiffer>
    <experiments>3</experiments>
</comment>
<comment type="interaction">
    <interactant intactId="EBI-23669343">
        <id>Q92782-2</id>
    </interactant>
    <interactant intactId="EBI-744302">
        <id>P14136</id>
        <label>GFAP</label>
    </interactant>
    <organismsDiffer>false</organismsDiffer>
    <experiments>3</experiments>
</comment>
<comment type="interaction">
    <interactant intactId="EBI-23669343">
        <id>Q92782-2</id>
    </interactant>
    <interactant intactId="EBI-357130">
        <id>P62873</id>
        <label>GNB1</label>
    </interactant>
    <organismsDiffer>false</organismsDiffer>
    <experiments>3</experiments>
</comment>
<comment type="interaction">
    <interactant intactId="EBI-23669343">
        <id>Q92782-2</id>
    </interactant>
    <interactant intactId="EBI-351506">
        <id>P06396</id>
        <label>GSN</label>
    </interactant>
    <organismsDiffer>false</organismsDiffer>
    <experiments>3</experiments>
</comment>
<comment type="interaction">
    <interactant intactId="EBI-23669343">
        <id>Q92782-2</id>
    </interactant>
    <interactant intactId="EBI-1054873">
        <id>Q9Y5Q9</id>
        <label>GTF3C3</label>
    </interactant>
    <organismsDiffer>false</organismsDiffer>
    <experiments>3</experiments>
</comment>
<comment type="interaction">
    <interactant intactId="EBI-23669343">
        <id>Q92782-2</id>
    </interactant>
    <interactant intactId="EBI-356991">
        <id>P54652</id>
        <label>HSPA2</label>
    </interactant>
    <organismsDiffer>false</organismsDiffer>
    <experiments>3</experiments>
</comment>
<comment type="interaction">
    <interactant intactId="EBI-23669343">
        <id>Q92782-2</id>
    </interactant>
    <interactant intactId="EBI-21591415">
        <id>P13473-2</id>
        <label>LAMP2</label>
    </interactant>
    <organismsDiffer>false</organismsDiffer>
    <experiments>3</experiments>
</comment>
<comment type="interaction">
    <interactant intactId="EBI-23669343">
        <id>Q92782-2</id>
    </interactant>
    <interactant intactId="EBI-1049381">
        <id>O00483</id>
        <label>NDUFA4</label>
    </interactant>
    <organismsDiffer>false</organismsDiffer>
    <experiments>3</experiments>
</comment>
<comment type="interaction">
    <interactant intactId="EBI-23669343">
        <id>Q92782-2</id>
    </interactant>
    <interactant intactId="EBI-530034">
        <id>O43189</id>
        <label>PHF1</label>
    </interactant>
    <organismsDiffer>false</organismsDiffer>
    <experiments>3</experiments>
</comment>
<comment type="interaction">
    <interactant intactId="EBI-23669343">
        <id>Q92782-2</id>
    </interactant>
    <interactant intactId="EBI-5280197">
        <id>O75400-2</id>
        <label>PRPF40A</label>
    </interactant>
    <organismsDiffer>false</organismsDiffer>
    <experiments>3</experiments>
</comment>
<comment type="interaction">
    <interactant intactId="EBI-23669343">
        <id>Q92782-2</id>
    </interactant>
    <interactant intactId="EBI-286642">
        <id>P62826</id>
        <label>RAN</label>
    </interactant>
    <organismsDiffer>false</organismsDiffer>
    <experiments>3</experiments>
</comment>
<comment type="interaction">
    <interactant intactId="EBI-23669343">
        <id>Q92782-2</id>
    </interactant>
    <interactant intactId="EBI-25891616">
        <id>P53985-2</id>
        <label>SLC16A1</label>
    </interactant>
    <organismsDiffer>false</organismsDiffer>
    <experiments>3</experiments>
</comment>
<comment type="interaction">
    <interactant intactId="EBI-23669343">
        <id>Q92782-2</id>
    </interactant>
    <interactant intactId="EBI-5235340">
        <id>Q7Z699</id>
        <label>SPRED1</label>
    </interactant>
    <organismsDiffer>false</organismsDiffer>
    <experiments>3</experiments>
</comment>
<comment type="interaction">
    <interactant intactId="EBI-23669343">
        <id>Q92782-2</id>
    </interactant>
    <interactant intactId="EBI-372899">
        <id>Q13148</id>
        <label>TARDBP</label>
    </interactant>
    <organismsDiffer>false</organismsDiffer>
    <experiments>6</experiments>
</comment>
<comment type="interaction">
    <interactant intactId="EBI-23669343">
        <id>Q92782-2</id>
    </interactant>
    <interactant intactId="EBI-25875545">
        <id>Q8NE91</id>
        <label>TM4SF1</label>
    </interactant>
    <organismsDiffer>false</organismsDiffer>
    <experiments>3</experiments>
</comment>
<comment type="interaction">
    <interactant intactId="EBI-23669343">
        <id>Q92782-2</id>
    </interactant>
    <interactant intactId="EBI-25900580">
        <id>Q9Y649</id>
    </interactant>
    <organismsDiffer>false</organismsDiffer>
    <experiments>3</experiments>
</comment>
<comment type="subcellular location">
    <subcellularLocation>
        <location evidence="4">Cytoplasm</location>
    </subcellularLocation>
    <subcellularLocation>
        <location evidence="4">Nucleus</location>
    </subcellularLocation>
</comment>
<comment type="alternative products">
    <event type="alternative splicing"/>
    <isoform>
        <id>Q92782-2</id>
        <name>2</name>
        <sequence type="displayed"/>
    </isoform>
    <isoform>
        <id>Q92782-1</id>
        <name>1</name>
        <sequence type="described" ref="VSP_061235 VSP_061236"/>
    </isoform>
    <isoform>
        <id>Q92782-3</id>
        <name>3</name>
        <sequence type="described" ref="VSP_061234"/>
    </isoform>
    <text>Additional isoforms seem to exist.</text>
</comment>
<comment type="similarity">
    <text evidence="4">Belongs to the requiem/DPF family.</text>
</comment>
<evidence type="ECO:0000250" key="1"/>
<evidence type="ECO:0000255" key="2">
    <source>
        <dbReference type="PROSITE-ProRule" id="PRU00042"/>
    </source>
</evidence>
<evidence type="ECO:0000255" key="3">
    <source>
        <dbReference type="PROSITE-ProRule" id="PRU00146"/>
    </source>
</evidence>
<evidence type="ECO:0000305" key="4"/>
<evidence type="ECO:0000312" key="5">
    <source>
        <dbReference type="HGNC" id="HGNC:20225"/>
    </source>
</evidence>
<evidence type="ECO:0007744" key="6">
    <source>
    </source>
</evidence>
<evidence type="ECO:0007744" key="7">
    <source>
    </source>
</evidence>
<gene>
    <name evidence="5" type="primary">DPF1</name>
    <name type="synonym">BAF45B</name>
    <name type="synonym">NEUD4</name>
</gene>
<sequence>MATVIPGPLSLGEDFYREAIEHCRSYNARLCAERSLRLPFLDSQTGVAQNNCYIWMEKTHRGPGLAPGQIYTYPARCWRKKRRLNILEDPRLRPCEYKIDCEAPLKKEGGLPEGPVLEALLCAETGEKKIELKEEETIMDCQKQQLLEFPHDLEVEDLEDDIPRRKNRAKGKAYGIGGLRKRQDTASLEDRDKPYVCDICGKRYKNRPGLSYHYTHTHLAEEEGEENAERHALPFHRKNNHKQFYKELAWVPEAQRKHTAKKAPDGTVIPNGYCDFCLGGSKKTGCPEDLISCADCGRSGHPSCLQFTVNMTAAVRTYRWQCIECKSCSLCGTSENDDQLLFCDDCDRGYHMYCLSPPMAEPPEGSWSCHLCLRHLKEKASAYITLT</sequence>
<proteinExistence type="evidence at protein level"/>
<organism>
    <name type="scientific">Homo sapiens</name>
    <name type="common">Human</name>
    <dbReference type="NCBI Taxonomy" id="9606"/>
    <lineage>
        <taxon>Eukaryota</taxon>
        <taxon>Metazoa</taxon>
        <taxon>Chordata</taxon>
        <taxon>Craniata</taxon>
        <taxon>Vertebrata</taxon>
        <taxon>Euteleostomi</taxon>
        <taxon>Mammalia</taxon>
        <taxon>Eutheria</taxon>
        <taxon>Euarchontoglires</taxon>
        <taxon>Primates</taxon>
        <taxon>Haplorrhini</taxon>
        <taxon>Catarrhini</taxon>
        <taxon>Hominidae</taxon>
        <taxon>Homo</taxon>
    </lineage>
</organism>
<feature type="chain" id="PRO_0000168145" description="Zinc finger protein neuro-d4">
    <location>
        <begin position="1"/>
        <end position="387"/>
    </location>
</feature>
<feature type="zinc finger region" description="C2H2-type" evidence="2">
    <location>
        <begin position="195"/>
        <end position="218"/>
    </location>
</feature>
<feature type="zinc finger region" description="PHD-type 1" evidence="3">
    <location>
        <begin position="271"/>
        <end position="328"/>
    </location>
</feature>
<feature type="zinc finger region" description="PHD-type 2" evidence="3">
    <location>
        <begin position="325"/>
        <end position="375"/>
    </location>
</feature>
<feature type="binding site" evidence="3">
    <location>
        <position position="274"/>
    </location>
    <ligand>
        <name>Zn(2+)</name>
        <dbReference type="ChEBI" id="CHEBI:29105"/>
        <label>1</label>
    </ligand>
</feature>
<feature type="binding site" evidence="3">
    <location>
        <position position="277"/>
    </location>
    <ligand>
        <name>Zn(2+)</name>
        <dbReference type="ChEBI" id="CHEBI:29105"/>
        <label>1</label>
    </ligand>
</feature>
<feature type="binding site" evidence="3">
    <location>
        <position position="293"/>
    </location>
    <ligand>
        <name>Zn(2+)</name>
        <dbReference type="ChEBI" id="CHEBI:29105"/>
        <label>2</label>
    </ligand>
</feature>
<feature type="binding site" evidence="3">
    <location>
        <position position="296"/>
    </location>
    <ligand>
        <name>Zn(2+)</name>
        <dbReference type="ChEBI" id="CHEBI:29105"/>
        <label>2</label>
    </ligand>
</feature>
<feature type="binding site" evidence="3">
    <location>
        <position position="301"/>
    </location>
    <ligand>
        <name>Zn(2+)</name>
        <dbReference type="ChEBI" id="CHEBI:29105"/>
        <label>1</label>
    </ligand>
</feature>
<feature type="binding site" evidence="3">
    <location>
        <position position="304"/>
    </location>
    <ligand>
        <name>Zn(2+)</name>
        <dbReference type="ChEBI" id="CHEBI:29105"/>
        <label>1</label>
    </ligand>
</feature>
<feature type="binding site" evidence="3">
    <location>
        <position position="322"/>
    </location>
    <ligand>
        <name>Zn(2+)</name>
        <dbReference type="ChEBI" id="CHEBI:29105"/>
        <label>2</label>
    </ligand>
</feature>
<feature type="binding site" evidence="3">
    <location>
        <position position="325"/>
    </location>
    <ligand>
        <name>Zn(2+)</name>
        <dbReference type="ChEBI" id="CHEBI:29105"/>
        <label>4</label>
    </ligand>
</feature>
<feature type="binding site" evidence="3">
    <location>
        <position position="328"/>
    </location>
    <ligand>
        <name>Zn(2+)</name>
        <dbReference type="ChEBI" id="CHEBI:29105"/>
        <label>3</label>
    </ligand>
</feature>
<feature type="binding site" evidence="3">
    <location>
        <position position="331"/>
    </location>
    <ligand>
        <name>Zn(2+)</name>
        <dbReference type="ChEBI" id="CHEBI:29105"/>
        <label>3</label>
    </ligand>
</feature>
<feature type="binding site" evidence="3">
    <location>
        <position position="343"/>
    </location>
    <ligand>
        <name>Zn(2+)</name>
        <dbReference type="ChEBI" id="CHEBI:29105"/>
        <label>4</label>
    </ligand>
</feature>
<feature type="binding site" evidence="3">
    <location>
        <position position="346"/>
    </location>
    <ligand>
        <name>Zn(2+)</name>
        <dbReference type="ChEBI" id="CHEBI:29105"/>
        <label>4</label>
    </ligand>
</feature>
<feature type="binding site" evidence="3">
    <location>
        <position position="351"/>
    </location>
    <ligand>
        <name>Zn(2+)</name>
        <dbReference type="ChEBI" id="CHEBI:29105"/>
        <label>3</label>
    </ligand>
</feature>
<feature type="binding site" evidence="3">
    <location>
        <position position="354"/>
    </location>
    <ligand>
        <name>Zn(2+)</name>
        <dbReference type="ChEBI" id="CHEBI:29105"/>
        <label>3</label>
    </ligand>
</feature>
<feature type="binding site" evidence="3">
    <location>
        <position position="369"/>
    </location>
    <ligand>
        <name>Zn(2+)</name>
        <dbReference type="ChEBI" id="CHEBI:29105"/>
        <label>4</label>
    </ligand>
</feature>
<feature type="binding site" evidence="3">
    <location>
        <position position="372"/>
    </location>
    <ligand>
        <name>Zn(2+)</name>
        <dbReference type="ChEBI" id="CHEBI:29105"/>
        <label>4</label>
    </ligand>
</feature>
<feature type="cross-link" description="Glycyl lysine isopeptide (Lys-Gly) (interchain with G-Cter in SUMO2)" evidence="6 7">
    <location>
        <position position="106"/>
    </location>
</feature>
<feature type="cross-link" description="Glycyl lysine isopeptide (Lys-Gly) (interchain with G-Cter in SUMO2)" evidence="7">
    <location>
        <position position="129"/>
    </location>
</feature>
<feature type="cross-link" description="Glycyl lysine isopeptide (Lys-Gly) (interchain with G-Cter in SUMO2)" evidence="7">
    <location>
        <position position="133"/>
    </location>
</feature>
<feature type="splice variant" id="VSP_061234" description="In isoform 3.">
    <location>
        <begin position="1"/>
        <end position="55"/>
    </location>
</feature>
<feature type="splice variant" id="VSP_061235" description="In isoform 1.">
    <original>ICGKRYKNRPGLSYHYTHTHLAEEEGEENAERHALPFHRKNNHKQ</original>
    <variation>K</variation>
    <location>
        <begin position="199"/>
        <end position="243"/>
    </location>
</feature>
<feature type="splice variant" id="VSP_061236" description="In isoform 1.">
    <original>D</original>
    <variation>DGASWAGLTPQ</variation>
    <location>
        <position position="337"/>
    </location>
</feature>
<feature type="sequence conflict" description="In Ref. 1; AAC50685." evidence="4" ref="1">
    <original>G</original>
    <variation>S</variation>
    <location>
        <position position="7"/>
    </location>
</feature>
<name>DPF1_HUMAN</name>
<reference key="1">
    <citation type="journal article" date="1996" name="Genomics">
        <title>The d4 gene family in the human genome.</title>
        <authorList>
            <person name="Chestkov A.V."/>
            <person name="Baka I.D."/>
            <person name="Kost M.V."/>
            <person name="Georgiev G.P."/>
            <person name="Buchman V.L."/>
        </authorList>
    </citation>
    <scope>NUCLEOTIDE SEQUENCE [MRNA] (ISOFORM 1)</scope>
    <source>
        <tissue>Brain</tissue>
    </source>
</reference>
<reference key="2">
    <citation type="journal article" date="2004" name="Nat. Genet.">
        <title>Complete sequencing and characterization of 21,243 full-length human cDNAs.</title>
        <authorList>
            <person name="Ota T."/>
            <person name="Suzuki Y."/>
            <person name="Nishikawa T."/>
            <person name="Otsuki T."/>
            <person name="Sugiyama T."/>
            <person name="Irie R."/>
            <person name="Wakamatsu A."/>
            <person name="Hayashi K."/>
            <person name="Sato H."/>
            <person name="Nagai K."/>
            <person name="Kimura K."/>
            <person name="Makita H."/>
            <person name="Sekine M."/>
            <person name="Obayashi M."/>
            <person name="Nishi T."/>
            <person name="Shibahara T."/>
            <person name="Tanaka T."/>
            <person name="Ishii S."/>
            <person name="Yamamoto J."/>
            <person name="Saito K."/>
            <person name="Kawai Y."/>
            <person name="Isono Y."/>
            <person name="Nakamura Y."/>
            <person name="Nagahari K."/>
            <person name="Murakami K."/>
            <person name="Yasuda T."/>
            <person name="Iwayanagi T."/>
            <person name="Wagatsuma M."/>
            <person name="Shiratori A."/>
            <person name="Sudo H."/>
            <person name="Hosoiri T."/>
            <person name="Kaku Y."/>
            <person name="Kodaira H."/>
            <person name="Kondo H."/>
            <person name="Sugawara M."/>
            <person name="Takahashi M."/>
            <person name="Kanda K."/>
            <person name="Yokoi T."/>
            <person name="Furuya T."/>
            <person name="Kikkawa E."/>
            <person name="Omura Y."/>
            <person name="Abe K."/>
            <person name="Kamihara K."/>
            <person name="Katsuta N."/>
            <person name="Sato K."/>
            <person name="Tanikawa M."/>
            <person name="Yamazaki M."/>
            <person name="Ninomiya K."/>
            <person name="Ishibashi T."/>
            <person name="Yamashita H."/>
            <person name="Murakawa K."/>
            <person name="Fujimori K."/>
            <person name="Tanai H."/>
            <person name="Kimata M."/>
            <person name="Watanabe M."/>
            <person name="Hiraoka S."/>
            <person name="Chiba Y."/>
            <person name="Ishida S."/>
            <person name="Ono Y."/>
            <person name="Takiguchi S."/>
            <person name="Watanabe S."/>
            <person name="Yosida M."/>
            <person name="Hotuta T."/>
            <person name="Kusano J."/>
            <person name="Kanehori K."/>
            <person name="Takahashi-Fujii A."/>
            <person name="Hara H."/>
            <person name="Tanase T.-O."/>
            <person name="Nomura Y."/>
            <person name="Togiya S."/>
            <person name="Komai F."/>
            <person name="Hara R."/>
            <person name="Takeuchi K."/>
            <person name="Arita M."/>
            <person name="Imose N."/>
            <person name="Musashino K."/>
            <person name="Yuuki H."/>
            <person name="Oshima A."/>
            <person name="Sasaki N."/>
            <person name="Aotsuka S."/>
            <person name="Yoshikawa Y."/>
            <person name="Matsunawa H."/>
            <person name="Ichihara T."/>
            <person name="Shiohata N."/>
            <person name="Sano S."/>
            <person name="Moriya S."/>
            <person name="Momiyama H."/>
            <person name="Satoh N."/>
            <person name="Takami S."/>
            <person name="Terashima Y."/>
            <person name="Suzuki O."/>
            <person name="Nakagawa S."/>
            <person name="Senoh A."/>
            <person name="Mizoguchi H."/>
            <person name="Goto Y."/>
            <person name="Shimizu F."/>
            <person name="Wakebe H."/>
            <person name="Hishigaki H."/>
            <person name="Watanabe T."/>
            <person name="Sugiyama A."/>
            <person name="Takemoto M."/>
            <person name="Kawakami B."/>
            <person name="Yamazaki M."/>
            <person name="Watanabe K."/>
            <person name="Kumagai A."/>
            <person name="Itakura S."/>
            <person name="Fukuzumi Y."/>
            <person name="Fujimori Y."/>
            <person name="Komiyama M."/>
            <person name="Tashiro H."/>
            <person name="Tanigami A."/>
            <person name="Fujiwara T."/>
            <person name="Ono T."/>
            <person name="Yamada K."/>
            <person name="Fujii Y."/>
            <person name="Ozaki K."/>
            <person name="Hirao M."/>
            <person name="Ohmori Y."/>
            <person name="Kawabata A."/>
            <person name="Hikiji T."/>
            <person name="Kobatake N."/>
            <person name="Inagaki H."/>
            <person name="Ikema Y."/>
            <person name="Okamoto S."/>
            <person name="Okitani R."/>
            <person name="Kawakami T."/>
            <person name="Noguchi S."/>
            <person name="Itoh T."/>
            <person name="Shigeta K."/>
            <person name="Senba T."/>
            <person name="Matsumura K."/>
            <person name="Nakajima Y."/>
            <person name="Mizuno T."/>
            <person name="Morinaga M."/>
            <person name="Sasaki M."/>
            <person name="Togashi T."/>
            <person name="Oyama M."/>
            <person name="Hata H."/>
            <person name="Watanabe M."/>
            <person name="Komatsu T."/>
            <person name="Mizushima-Sugano J."/>
            <person name="Satoh T."/>
            <person name="Shirai Y."/>
            <person name="Takahashi Y."/>
            <person name="Nakagawa K."/>
            <person name="Okumura K."/>
            <person name="Nagase T."/>
            <person name="Nomura N."/>
            <person name="Kikuchi H."/>
            <person name="Masuho Y."/>
            <person name="Yamashita R."/>
            <person name="Nakai K."/>
            <person name="Yada T."/>
            <person name="Nakamura Y."/>
            <person name="Ohara O."/>
            <person name="Isogai T."/>
            <person name="Sugano S."/>
        </authorList>
    </citation>
    <scope>NUCLEOTIDE SEQUENCE [LARGE SCALE MRNA] (ISOFORM 3)</scope>
    <source>
        <tissue>Amygdala</tissue>
        <tissue>Cerebellum</tissue>
    </source>
</reference>
<reference key="3">
    <citation type="journal article" date="2004" name="Nature">
        <title>The DNA sequence and biology of human chromosome 19.</title>
        <authorList>
            <person name="Grimwood J."/>
            <person name="Gordon L.A."/>
            <person name="Olsen A.S."/>
            <person name="Terry A."/>
            <person name="Schmutz J."/>
            <person name="Lamerdin J.E."/>
            <person name="Hellsten U."/>
            <person name="Goodstein D."/>
            <person name="Couronne O."/>
            <person name="Tran-Gyamfi M."/>
            <person name="Aerts A."/>
            <person name="Altherr M."/>
            <person name="Ashworth L."/>
            <person name="Bajorek E."/>
            <person name="Black S."/>
            <person name="Branscomb E."/>
            <person name="Caenepeel S."/>
            <person name="Carrano A.V."/>
            <person name="Caoile C."/>
            <person name="Chan Y.M."/>
            <person name="Christensen M."/>
            <person name="Cleland C.A."/>
            <person name="Copeland A."/>
            <person name="Dalin E."/>
            <person name="Dehal P."/>
            <person name="Denys M."/>
            <person name="Detter J.C."/>
            <person name="Escobar J."/>
            <person name="Flowers D."/>
            <person name="Fotopulos D."/>
            <person name="Garcia C."/>
            <person name="Georgescu A.M."/>
            <person name="Glavina T."/>
            <person name="Gomez M."/>
            <person name="Gonzales E."/>
            <person name="Groza M."/>
            <person name="Hammon N."/>
            <person name="Hawkins T."/>
            <person name="Haydu L."/>
            <person name="Ho I."/>
            <person name="Huang W."/>
            <person name="Israni S."/>
            <person name="Jett J."/>
            <person name="Kadner K."/>
            <person name="Kimball H."/>
            <person name="Kobayashi A."/>
            <person name="Larionov V."/>
            <person name="Leem S.-H."/>
            <person name="Lopez F."/>
            <person name="Lou Y."/>
            <person name="Lowry S."/>
            <person name="Malfatti S."/>
            <person name="Martinez D."/>
            <person name="McCready P.M."/>
            <person name="Medina C."/>
            <person name="Morgan J."/>
            <person name="Nelson K."/>
            <person name="Nolan M."/>
            <person name="Ovcharenko I."/>
            <person name="Pitluck S."/>
            <person name="Pollard M."/>
            <person name="Popkie A.P."/>
            <person name="Predki P."/>
            <person name="Quan G."/>
            <person name="Ramirez L."/>
            <person name="Rash S."/>
            <person name="Retterer J."/>
            <person name="Rodriguez A."/>
            <person name="Rogers S."/>
            <person name="Salamov A."/>
            <person name="Salazar A."/>
            <person name="She X."/>
            <person name="Smith D."/>
            <person name="Slezak T."/>
            <person name="Solovyev V."/>
            <person name="Thayer N."/>
            <person name="Tice H."/>
            <person name="Tsai M."/>
            <person name="Ustaszewska A."/>
            <person name="Vo N."/>
            <person name="Wagner M."/>
            <person name="Wheeler J."/>
            <person name="Wu K."/>
            <person name="Xie G."/>
            <person name="Yang J."/>
            <person name="Dubchak I."/>
            <person name="Furey T.S."/>
            <person name="DeJong P."/>
            <person name="Dickson M."/>
            <person name="Gordon D."/>
            <person name="Eichler E.E."/>
            <person name="Pennacchio L.A."/>
            <person name="Richardson P."/>
            <person name="Stubbs L."/>
            <person name="Rokhsar D.S."/>
            <person name="Myers R.M."/>
            <person name="Rubin E.M."/>
            <person name="Lucas S.M."/>
        </authorList>
    </citation>
    <scope>NUCLEOTIDE SEQUENCE [LARGE SCALE GENOMIC DNA]</scope>
</reference>
<reference key="4">
    <citation type="submission" date="2005-07" db="EMBL/GenBank/DDBJ databases">
        <authorList>
            <person name="Mural R.J."/>
            <person name="Istrail S."/>
            <person name="Sutton G.G."/>
            <person name="Florea L."/>
            <person name="Halpern A.L."/>
            <person name="Mobarry C.M."/>
            <person name="Lippert R."/>
            <person name="Walenz B."/>
            <person name="Shatkay H."/>
            <person name="Dew I."/>
            <person name="Miller J.R."/>
            <person name="Flanigan M.J."/>
            <person name="Edwards N.J."/>
            <person name="Bolanos R."/>
            <person name="Fasulo D."/>
            <person name="Halldorsson B.V."/>
            <person name="Hannenhalli S."/>
            <person name="Turner R."/>
            <person name="Yooseph S."/>
            <person name="Lu F."/>
            <person name="Nusskern D.R."/>
            <person name="Shue B.C."/>
            <person name="Zheng X.H."/>
            <person name="Zhong F."/>
            <person name="Delcher A.L."/>
            <person name="Huson D.H."/>
            <person name="Kravitz S.A."/>
            <person name="Mouchard L."/>
            <person name="Reinert K."/>
            <person name="Remington K.A."/>
            <person name="Clark A.G."/>
            <person name="Waterman M.S."/>
            <person name="Eichler E.E."/>
            <person name="Adams M.D."/>
            <person name="Hunkapiller M.W."/>
            <person name="Myers E.W."/>
            <person name="Venter J.C."/>
        </authorList>
    </citation>
    <scope>NUCLEOTIDE SEQUENCE [LARGE SCALE GENOMIC DNA]</scope>
</reference>
<reference key="5">
    <citation type="journal article" date="2004" name="Genome Res.">
        <title>The status, quality, and expansion of the NIH full-length cDNA project: the Mammalian Gene Collection (MGC).</title>
        <authorList>
            <consortium name="The MGC Project Team"/>
        </authorList>
    </citation>
    <scope>NUCLEOTIDE SEQUENCE [LARGE SCALE MRNA] (ISOFORM 2)</scope>
</reference>
<reference key="6">
    <citation type="journal article" date="2015" name="Mol. Cell. Proteomics">
        <title>System-wide analysis of SUMOylation dynamics in response to replication stress reveals novel small ubiquitin-like modified target proteins and acceptor lysines relevant for genome stability.</title>
        <authorList>
            <person name="Xiao Z."/>
            <person name="Chang J.G."/>
            <person name="Hendriks I.A."/>
            <person name="Sigurdsson J.O."/>
            <person name="Olsen J.V."/>
            <person name="Vertegaal A.C."/>
        </authorList>
    </citation>
    <scope>SUMOYLATION [LARGE SCALE ANALYSIS] AT LYS-106</scope>
    <scope>IDENTIFICATION BY MASS SPECTROMETRY [LARGE SCALE ANALYSIS]</scope>
</reference>
<reference key="7">
    <citation type="journal article" date="2017" name="Nat. Struct. Mol. Biol.">
        <title>Site-specific mapping of the human SUMO proteome reveals co-modification with phosphorylation.</title>
        <authorList>
            <person name="Hendriks I.A."/>
            <person name="Lyon D."/>
            <person name="Young C."/>
            <person name="Jensen L.J."/>
            <person name="Vertegaal A.C."/>
            <person name="Nielsen M.L."/>
        </authorList>
    </citation>
    <scope>SUMOYLATION [LARGE SCALE ANALYSIS] AT LYS-106; LYS-129 AND LYS-133</scope>
    <scope>IDENTIFICATION BY MASS SPECTROMETRY [LARGE SCALE ANALYSIS]</scope>
</reference>